<sequence>GGETSGETKGMWFGPRL</sequence>
<protein>
    <recommendedName>
        <fullName evidence="1">Pyrokinin-5</fullName>
    </recommendedName>
    <alternativeName>
        <fullName evidence="1">FXPRL-amide</fullName>
    </alternativeName>
    <alternativeName>
        <fullName evidence="4">LaxSp-Capa-PK</fullName>
    </alternativeName>
</protein>
<proteinExistence type="evidence at protein level"/>
<comment type="function">
    <text evidence="1">Myoactive.</text>
</comment>
<comment type="subcellular location">
    <subcellularLocation>
        <location evidence="5">Secreted</location>
    </subcellularLocation>
</comment>
<comment type="similarity">
    <text evidence="2">Belongs to the pyrokinin family.</text>
</comment>
<evidence type="ECO:0000250" key="1">
    <source>
        <dbReference type="UniProtKB" id="P82617"/>
    </source>
</evidence>
<evidence type="ECO:0000255" key="2"/>
<evidence type="ECO:0000269" key="3">
    <source>
    </source>
</evidence>
<evidence type="ECO:0000303" key="4">
    <source>
    </source>
</evidence>
<evidence type="ECO:0000305" key="5"/>
<accession>P85656</accession>
<feature type="peptide" id="PRO_0000378700" description="Pyrokinin-5" evidence="3">
    <location>
        <begin position="1"/>
        <end position="17"/>
    </location>
</feature>
<feature type="modified residue" description="Leucine amide" evidence="3">
    <location>
        <position position="17"/>
    </location>
</feature>
<dbReference type="GO" id="GO:0005576">
    <property type="term" value="C:extracellular region"/>
    <property type="evidence" value="ECO:0007669"/>
    <property type="project" value="UniProtKB-SubCell"/>
</dbReference>
<dbReference type="GO" id="GO:0005184">
    <property type="term" value="F:neuropeptide hormone activity"/>
    <property type="evidence" value="ECO:0007669"/>
    <property type="project" value="InterPro"/>
</dbReference>
<dbReference type="GO" id="GO:0007218">
    <property type="term" value="P:neuropeptide signaling pathway"/>
    <property type="evidence" value="ECO:0007669"/>
    <property type="project" value="UniProtKB-KW"/>
</dbReference>
<dbReference type="InterPro" id="IPR001484">
    <property type="entry name" value="Pyrokinin_CS"/>
</dbReference>
<dbReference type="PROSITE" id="PS00539">
    <property type="entry name" value="PYROKININ"/>
    <property type="match status" value="1"/>
</dbReference>
<name>PPK5_LAXSS</name>
<organism>
    <name type="scientific">Laxta sp. (strain SR-2005)</name>
    <name type="common">Cockroach</name>
    <dbReference type="NCBI Taxonomy" id="348757"/>
    <lineage>
        <taxon>Eukaryota</taxon>
        <taxon>Metazoa</taxon>
        <taxon>Ecdysozoa</taxon>
        <taxon>Arthropoda</taxon>
        <taxon>Hexapoda</taxon>
        <taxon>Insecta</taxon>
        <taxon>Pterygota</taxon>
        <taxon>Neoptera</taxon>
        <taxon>Polyneoptera</taxon>
        <taxon>Dictyoptera</taxon>
        <taxon>Blattodea</taxon>
        <taxon>Blaberoidea</taxon>
        <taxon>Blaberidae</taxon>
        <taxon>Perisphaerinae</taxon>
        <taxon>Laxta</taxon>
    </lineage>
</organism>
<keyword id="KW-0027">Amidation</keyword>
<keyword id="KW-0903">Direct protein sequencing</keyword>
<keyword id="KW-0527">Neuropeptide</keyword>
<keyword id="KW-0964">Secreted</keyword>
<reference evidence="5" key="1">
    <citation type="journal article" date="2009" name="BMC Evol. Biol.">
        <title>A proteomic approach for studying insect phylogeny: CAPA peptides of ancient insect taxa (Dictyoptera, Blattoptera) as a test case.</title>
        <authorList>
            <person name="Roth S."/>
            <person name="Fromm B."/>
            <person name="Gaede G."/>
            <person name="Predel R."/>
        </authorList>
    </citation>
    <scope>PROTEIN SEQUENCE</scope>
    <scope>AMIDATION AT LEU-17</scope>
    <source>
        <tissue evidence="3">Abdominal perisympathetic organs</tissue>
    </source>
</reference>